<sequence length="250" mass="28756">MNVRRVESISAQLEEASSTGGFLYAQNNTKRSIKERLMKLLPCSAAKTSSPAIQNSVEDELEMATVRHRPEALELLEAQSKFTKKELQILYRGFKNECPSGVVNEETFKEIYSQFFPQGDSTTYAHFLFNAFDTDHNGAVSFEDFIKGLSILLRGTVQEKLNWAFNLYDINKDGYITKEEMLDIMKAIYDMMGKCTYPVLKEDAPRQHVETFFQKMDKNKDGVVTIDEFIESCQKDENIMRSMQLFENVI</sequence>
<evidence type="ECO:0000250" key="1">
    <source>
        <dbReference type="UniProtKB" id="Q6PIL6"/>
    </source>
</evidence>
<evidence type="ECO:0000250" key="2">
    <source>
        <dbReference type="UniProtKB" id="Q8R426"/>
    </source>
</evidence>
<evidence type="ECO:0000255" key="3">
    <source>
        <dbReference type="PROSITE-ProRule" id="PRU00448"/>
    </source>
</evidence>
<evidence type="ECO:0000269" key="4">
    <source>
    </source>
</evidence>
<evidence type="ECO:0000269" key="5">
    <source>
    </source>
</evidence>
<evidence type="ECO:0000269" key="6">
    <source>
    </source>
</evidence>
<evidence type="ECO:0000269" key="7">
    <source>
    </source>
</evidence>
<evidence type="ECO:0000269" key="8">
    <source>
    </source>
</evidence>
<evidence type="ECO:0000269" key="9">
    <source>
    </source>
</evidence>
<evidence type="ECO:0000303" key="10">
    <source>
    </source>
</evidence>
<evidence type="ECO:0000303" key="11">
    <source>
    </source>
</evidence>
<evidence type="ECO:0000303" key="12">
    <source ref="3"/>
</evidence>
<evidence type="ECO:0000303" key="13">
    <source ref="6"/>
</evidence>
<evidence type="ECO:0000305" key="14"/>
<evidence type="ECO:0007744" key="15">
    <source>
    </source>
</evidence>
<evidence type="ECO:0007829" key="16">
    <source>
        <dbReference type="PDB" id="3DD4"/>
    </source>
</evidence>
<proteinExistence type="evidence at protein level"/>
<reference key="1">
    <citation type="journal article" date="2002" name="J. Biol. Chem.">
        <title>Molecular cloning and characterization of CALP/KChIP4, a novel EF-hand protein interacting with presenilin 2 and voltage-gated potassium channel subunit Kv4.</title>
        <authorList>
            <person name="Morohashi Y."/>
            <person name="Hatano N."/>
            <person name="Ohya S."/>
            <person name="Takikawa R."/>
            <person name="Watabiki T."/>
            <person name="Takasugi N."/>
            <person name="Imaizumi Y."/>
            <person name="Tomita T."/>
            <person name="Iwatsubo T."/>
        </authorList>
    </citation>
    <scope>NUCLEOTIDE SEQUENCE [MRNA] (ISOFORM 1)</scope>
    <scope>TISSUE SPECIFICITY</scope>
    <source>
        <tissue>Brain</tissue>
    </source>
</reference>
<reference key="2">
    <citation type="journal article" date="2002" name="Proc. Natl. Acad. Sci. U.S.A.">
        <title>Elimination of fast inactivation in Kv4 A-type potassium channels by an auxiliary subunit domain.</title>
        <authorList>
            <person name="Holmqvist M.H."/>
            <person name="Cao J."/>
            <person name="Hernandez-Pineda R."/>
            <person name="Jacobson M.D."/>
            <person name="Carroll K.I."/>
            <person name="Sung M.A."/>
            <person name="Betty M."/>
            <person name="Ge P."/>
            <person name="Gilbride K.J."/>
            <person name="Brown M.E."/>
            <person name="Jurman M.E."/>
            <person name="Lawson D."/>
            <person name="Silos-Santiago I."/>
            <person name="Xie Y."/>
            <person name="Covarrubias M."/>
            <person name="Rhodes K.J."/>
            <person name="Distefano P.S."/>
            <person name="An W.F."/>
        </authorList>
    </citation>
    <scope>NUCLEOTIDE SEQUENCE [MRNA] (ISOFORM 4)</scope>
    <scope>FUNCTION</scope>
    <scope>TISSUE SPECIFICITY</scope>
    <scope>DOMAIN</scope>
    <scope>INTERACTION WITH KCND2</scope>
    <source>
        <strain>C57BL/6J</strain>
    </source>
</reference>
<reference key="3">
    <citation type="submission" date="2004-06" db="EMBL/GenBank/DDBJ databases">
        <authorList>
            <person name="Xia K.U."/>
            <person name="Fang H.Y."/>
            <person name="Zhong X.Y."/>
            <person name="Xia J.H."/>
            <person name="Zhang Z.H."/>
        </authorList>
    </citation>
    <scope>NUCLEOTIDE SEQUENCE [MRNA] (ISOFORM 3)</scope>
</reference>
<reference key="4">
    <citation type="journal article" date="2005" name="Science">
        <title>The transcriptional landscape of the mammalian genome.</title>
        <authorList>
            <person name="Carninci P."/>
            <person name="Kasukawa T."/>
            <person name="Katayama S."/>
            <person name="Gough J."/>
            <person name="Frith M.C."/>
            <person name="Maeda N."/>
            <person name="Oyama R."/>
            <person name="Ravasi T."/>
            <person name="Lenhard B."/>
            <person name="Wells C."/>
            <person name="Kodzius R."/>
            <person name="Shimokawa K."/>
            <person name="Bajic V.B."/>
            <person name="Brenner S.E."/>
            <person name="Batalov S."/>
            <person name="Forrest A.R."/>
            <person name="Zavolan M."/>
            <person name="Davis M.J."/>
            <person name="Wilming L.G."/>
            <person name="Aidinis V."/>
            <person name="Allen J.E."/>
            <person name="Ambesi-Impiombato A."/>
            <person name="Apweiler R."/>
            <person name="Aturaliya R.N."/>
            <person name="Bailey T.L."/>
            <person name="Bansal M."/>
            <person name="Baxter L."/>
            <person name="Beisel K.W."/>
            <person name="Bersano T."/>
            <person name="Bono H."/>
            <person name="Chalk A.M."/>
            <person name="Chiu K.P."/>
            <person name="Choudhary V."/>
            <person name="Christoffels A."/>
            <person name="Clutterbuck D.R."/>
            <person name="Crowe M.L."/>
            <person name="Dalla E."/>
            <person name="Dalrymple B.P."/>
            <person name="de Bono B."/>
            <person name="Della Gatta G."/>
            <person name="di Bernardo D."/>
            <person name="Down T."/>
            <person name="Engstrom P."/>
            <person name="Fagiolini M."/>
            <person name="Faulkner G."/>
            <person name="Fletcher C.F."/>
            <person name="Fukushima T."/>
            <person name="Furuno M."/>
            <person name="Futaki S."/>
            <person name="Gariboldi M."/>
            <person name="Georgii-Hemming P."/>
            <person name="Gingeras T.R."/>
            <person name="Gojobori T."/>
            <person name="Green R.E."/>
            <person name="Gustincich S."/>
            <person name="Harbers M."/>
            <person name="Hayashi Y."/>
            <person name="Hensch T.K."/>
            <person name="Hirokawa N."/>
            <person name="Hill D."/>
            <person name="Huminiecki L."/>
            <person name="Iacono M."/>
            <person name="Ikeo K."/>
            <person name="Iwama A."/>
            <person name="Ishikawa T."/>
            <person name="Jakt M."/>
            <person name="Kanapin A."/>
            <person name="Katoh M."/>
            <person name="Kawasawa Y."/>
            <person name="Kelso J."/>
            <person name="Kitamura H."/>
            <person name="Kitano H."/>
            <person name="Kollias G."/>
            <person name="Krishnan S.P."/>
            <person name="Kruger A."/>
            <person name="Kummerfeld S.K."/>
            <person name="Kurochkin I.V."/>
            <person name="Lareau L.F."/>
            <person name="Lazarevic D."/>
            <person name="Lipovich L."/>
            <person name="Liu J."/>
            <person name="Liuni S."/>
            <person name="McWilliam S."/>
            <person name="Madan Babu M."/>
            <person name="Madera M."/>
            <person name="Marchionni L."/>
            <person name="Matsuda H."/>
            <person name="Matsuzawa S."/>
            <person name="Miki H."/>
            <person name="Mignone F."/>
            <person name="Miyake S."/>
            <person name="Morris K."/>
            <person name="Mottagui-Tabar S."/>
            <person name="Mulder N."/>
            <person name="Nakano N."/>
            <person name="Nakauchi H."/>
            <person name="Ng P."/>
            <person name="Nilsson R."/>
            <person name="Nishiguchi S."/>
            <person name="Nishikawa S."/>
            <person name="Nori F."/>
            <person name="Ohara O."/>
            <person name="Okazaki Y."/>
            <person name="Orlando V."/>
            <person name="Pang K.C."/>
            <person name="Pavan W.J."/>
            <person name="Pavesi G."/>
            <person name="Pesole G."/>
            <person name="Petrovsky N."/>
            <person name="Piazza S."/>
            <person name="Reed J."/>
            <person name="Reid J.F."/>
            <person name="Ring B.Z."/>
            <person name="Ringwald M."/>
            <person name="Rost B."/>
            <person name="Ruan Y."/>
            <person name="Salzberg S.L."/>
            <person name="Sandelin A."/>
            <person name="Schneider C."/>
            <person name="Schoenbach C."/>
            <person name="Sekiguchi K."/>
            <person name="Semple C.A."/>
            <person name="Seno S."/>
            <person name="Sessa L."/>
            <person name="Sheng Y."/>
            <person name="Shibata Y."/>
            <person name="Shimada H."/>
            <person name="Shimada K."/>
            <person name="Silva D."/>
            <person name="Sinclair B."/>
            <person name="Sperling S."/>
            <person name="Stupka E."/>
            <person name="Sugiura K."/>
            <person name="Sultana R."/>
            <person name="Takenaka Y."/>
            <person name="Taki K."/>
            <person name="Tammoja K."/>
            <person name="Tan S.L."/>
            <person name="Tang S."/>
            <person name="Taylor M.S."/>
            <person name="Tegner J."/>
            <person name="Teichmann S.A."/>
            <person name="Ueda H.R."/>
            <person name="van Nimwegen E."/>
            <person name="Verardo R."/>
            <person name="Wei C.L."/>
            <person name="Yagi K."/>
            <person name="Yamanishi H."/>
            <person name="Zabarovsky E."/>
            <person name="Zhu S."/>
            <person name="Zimmer A."/>
            <person name="Hide W."/>
            <person name="Bult C."/>
            <person name="Grimmond S.M."/>
            <person name="Teasdale R.D."/>
            <person name="Liu E.T."/>
            <person name="Brusic V."/>
            <person name="Quackenbush J."/>
            <person name="Wahlestedt C."/>
            <person name="Mattick J.S."/>
            <person name="Hume D.A."/>
            <person name="Kai C."/>
            <person name="Sasaki D."/>
            <person name="Tomaru Y."/>
            <person name="Fukuda S."/>
            <person name="Kanamori-Katayama M."/>
            <person name="Suzuki M."/>
            <person name="Aoki J."/>
            <person name="Arakawa T."/>
            <person name="Iida J."/>
            <person name="Imamura K."/>
            <person name="Itoh M."/>
            <person name="Kato T."/>
            <person name="Kawaji H."/>
            <person name="Kawagashira N."/>
            <person name="Kawashima T."/>
            <person name="Kojima M."/>
            <person name="Kondo S."/>
            <person name="Konno H."/>
            <person name="Nakano K."/>
            <person name="Ninomiya N."/>
            <person name="Nishio T."/>
            <person name="Okada M."/>
            <person name="Plessy C."/>
            <person name="Shibata K."/>
            <person name="Shiraki T."/>
            <person name="Suzuki S."/>
            <person name="Tagami M."/>
            <person name="Waki K."/>
            <person name="Watahiki A."/>
            <person name="Okamura-Oho Y."/>
            <person name="Suzuki H."/>
            <person name="Kawai J."/>
            <person name="Hayashizaki Y."/>
        </authorList>
    </citation>
    <scope>NUCLEOTIDE SEQUENCE [LARGE SCALE MRNA] (ISOFORM 4)</scope>
    <source>
        <strain>C57BL/6J</strain>
        <tissue>Hypothalamus</tissue>
    </source>
</reference>
<reference key="5">
    <citation type="journal article" date="2004" name="Genome Res.">
        <title>The status, quality, and expansion of the NIH full-length cDNA project: the Mammalian Gene Collection (MGC).</title>
        <authorList>
            <consortium name="The MGC Project Team"/>
        </authorList>
    </citation>
    <scope>NUCLEOTIDE SEQUENCE [LARGE SCALE MRNA] (ISOFORM 1)</scope>
    <source>
        <tissue>Brain</tissue>
    </source>
</reference>
<reference key="6">
    <citation type="submission" date="2004-01" db="EMBL/GenBank/DDBJ databases">
        <title>Expressed sequence tag analysis of mouse retina.</title>
        <authorList>
            <person name="Ida H."/>
            <person name="Boylan S."/>
            <person name="Weigel A."/>
            <person name="Smit-McBride Z."/>
            <person name="Chao A."/>
            <person name="Gao J."/>
            <person name="Buchoff P."/>
            <person name="Wistow G."/>
            <person name="Hjelmeland L."/>
        </authorList>
    </citation>
    <scope>NUCLEOTIDE SEQUENCE [LARGE SCALE MRNA] OF 1-192 (ISOFORM 2)</scope>
    <source>
        <tissue>Retina</tissue>
    </source>
</reference>
<reference key="7">
    <citation type="journal article" date="2004" name="Brain Res. Mol. Brain Res.">
        <title>Differential distribution of KChIPs mRNAs in adult mouse brain.</title>
        <authorList>
            <person name="Xiong H."/>
            <person name="Kovacs I."/>
            <person name="Zhang Z."/>
        </authorList>
    </citation>
    <scope>TISSUE SPECIFICITY</scope>
</reference>
<reference key="8">
    <citation type="journal article" date="2009" name="Channels">
        <title>Proteomic analyses of native brain K(V)4.2 channel complexes.</title>
        <authorList>
            <person name="Marionneau C."/>
            <person name="LeDuc R.D."/>
            <person name="Rohrs H.W."/>
            <person name="Link A.J."/>
            <person name="Townsend R.R."/>
            <person name="Nerbonne J.M."/>
        </authorList>
    </citation>
    <scope>SUBUNIT</scope>
    <scope>IDENTIFICATION BY MASS SPECTROMETRY</scope>
</reference>
<reference key="9">
    <citation type="journal article" date="2010" name="Cell">
        <title>A tissue-specific atlas of mouse protein phosphorylation and expression.</title>
        <authorList>
            <person name="Huttlin E.L."/>
            <person name="Jedrychowski M.P."/>
            <person name="Elias J.E."/>
            <person name="Goswami T."/>
            <person name="Rad R."/>
            <person name="Beausoleil S.A."/>
            <person name="Villen J."/>
            <person name="Haas W."/>
            <person name="Sowa M.E."/>
            <person name="Gygi S.P."/>
        </authorList>
    </citation>
    <scope>PHOSPHORYLATION [LARGE SCALE ANALYSIS] AT SER-17 AND SER-56</scope>
    <scope>IDENTIFICATION BY MASS SPECTROMETRY [LARGE SCALE ANALYSIS]</scope>
    <source>
        <tissue>Brain</tissue>
    </source>
</reference>
<reference key="10">
    <citation type="journal article" date="2010" name="J. Neurosci.">
        <title>Interdependent roles for accessory KChIP2, KChIP3, and KChIP4 subunits in the generation of Kv4-encoded IA channels in cortical pyramidal neurons.</title>
        <authorList>
            <person name="Norris A.J."/>
            <person name="Foeger N.C."/>
            <person name="Nerbonne J.M."/>
        </authorList>
    </citation>
    <scope>INTERACTION WITH KCND2</scope>
    <scope>FUNCTION</scope>
</reference>
<reference key="11">
    <citation type="journal article" date="2010" name="Mol. Cell. Neurosci.">
        <title>KChIP4a regulates Kv4.2 channel trafficking through PKA phosphorylation.</title>
        <authorList>
            <person name="Lin L."/>
            <person name="Sun W."/>
            <person name="Wikenheiser A.M."/>
            <person name="Kung F."/>
            <person name="Hoffman D.A."/>
        </authorList>
    </citation>
    <scope>FUNCTION</scope>
    <scope>INTERACTION WITH KCND2</scope>
</reference>
<reference key="12">
    <citation type="journal article" date="2009" name="J. Biol. Chem.">
        <title>Structural insights into KChIP4a modulation of Kv4.3 inactivation.</title>
        <authorList>
            <person name="Liang P."/>
            <person name="Wang H."/>
            <person name="Chen H."/>
            <person name="Cui Y."/>
            <person name="Gu L."/>
            <person name="Chai J."/>
            <person name="Wang K."/>
        </authorList>
    </citation>
    <scope>X-RAY CRYSTALLOGRAPHY (3.0 ANGSTROMS) OF 56-250 IN COMPLEX WITH CALCIUM IONS</scope>
    <scope>INTERACTION WITH KCND3/KV4.3</scope>
    <scope>FUNCTION</scope>
</reference>
<comment type="function">
    <text evidence="7 8 9">Regulatory subunit of Kv4/D (Shal)-type voltage-gated rapidly inactivating A-type potassium channels, such as KCND2/Kv4.2 and KCND3/Kv4.3 (PubMed:19109250). Modulates channel expression at the cell membrane, gating characteristics, inactivation kinetics and rate of recovery from inactivation in a calcium-dependent and isoform-specific manner.</text>
</comment>
<comment type="subunit">
    <text evidence="1 4 7 8 9">Component of heteromultimeric potassium channels (PubMed:19713751, PubMed:20943905). Identified in potassium channel complexes containing KCND1, KCND2, KCND3, KCNIP1, KCNIP2, KCNIP3, KCNIP4, DPP6 and DPP10 (PubMed:19713751). Interacts with the C-terminus of PSEN2 and probably PSEN1 (By similarity). Interacts with KCND2 and KCND3.</text>
</comment>
<comment type="subcellular location">
    <subcellularLocation>
        <location evidence="1">Cell membrane</location>
        <topology evidence="1">Peripheral membrane protein</topology>
    </subcellularLocation>
    <subcellularLocation>
        <location evidence="1">Cytoplasm</location>
    </subcellularLocation>
    <subcellularLocation>
        <location evidence="1">Peroxisome</location>
    </subcellularLocation>
</comment>
<comment type="alternative products">
    <event type="alternative splicing"/>
    <isoform>
        <id>Q6PHZ8-1</id>
        <name>1</name>
        <sequence type="displayed"/>
    </isoform>
    <isoform>
        <id>Q6PHZ8-2</id>
        <name>2</name>
        <sequence type="described" ref="VSP_015071"/>
    </isoform>
    <isoform>
        <id>Q6PHZ8-3</id>
        <name>3</name>
        <sequence type="described" ref="VSP_015069"/>
    </isoform>
    <isoform>
        <id>Q6PHZ8-4</id>
        <name>4</name>
        <name>KChIPa</name>
        <sequence type="described" ref="VSP_015070"/>
    </isoform>
</comment>
<comment type="tissue specificity">
    <text evidence="4 5 6">Expressed in brain. Highly expressed by neurons in layers II-IV of cortex and in hippocampus, thalamus and the Purkinje cell layer of the cerebellum.</text>
</comment>
<comment type="domain">
    <text evidence="4">The KIS (K-channel inactivation suppressor) domain is required for converting A-type Kv4 current to a slowly inactivating delayed rectifier potassium current.</text>
</comment>
<comment type="similarity">
    <text evidence="14">Belongs to the recoverin family.</text>
</comment>
<protein>
    <recommendedName>
        <fullName>Kv channel-interacting protein 4</fullName>
        <shortName>KChIP4</shortName>
    </recommendedName>
    <alternativeName>
        <fullName>A-type potassium channel modulatory protein 4</fullName>
    </alternativeName>
    <alternativeName>
        <fullName>Calsenilin-like protein</fullName>
    </alternativeName>
    <alternativeName>
        <fullName>Potassium channel-interacting protein 4</fullName>
    </alternativeName>
</protein>
<keyword id="KW-0002">3D-structure</keyword>
<keyword id="KW-0025">Alternative splicing</keyword>
<keyword id="KW-0106">Calcium</keyword>
<keyword id="KW-1003">Cell membrane</keyword>
<keyword id="KW-0963">Cytoplasm</keyword>
<keyword id="KW-0407">Ion channel</keyword>
<keyword id="KW-0406">Ion transport</keyword>
<keyword id="KW-0472">Membrane</keyword>
<keyword id="KW-0479">Metal-binding</keyword>
<keyword id="KW-0576">Peroxisome</keyword>
<keyword id="KW-0597">Phosphoprotein</keyword>
<keyword id="KW-0630">Potassium</keyword>
<keyword id="KW-0631">Potassium channel</keyword>
<keyword id="KW-0633">Potassium transport</keyword>
<keyword id="KW-1185">Reference proteome</keyword>
<keyword id="KW-0677">Repeat</keyword>
<keyword id="KW-0813">Transport</keyword>
<keyword id="KW-0851">Voltage-gated channel</keyword>
<feature type="chain" id="PRO_0000073827" description="Kv channel-interacting protein 4">
    <location>
        <begin position="1"/>
        <end position="250"/>
    </location>
</feature>
<feature type="domain" description="EF-hand 1; degenerate" evidence="14">
    <location>
        <begin position="61"/>
        <end position="117"/>
    </location>
</feature>
<feature type="domain" description="EF-hand 2" evidence="3">
    <location>
        <begin position="120"/>
        <end position="155"/>
    </location>
</feature>
<feature type="domain" description="EF-hand 3" evidence="3">
    <location>
        <begin position="156"/>
        <end position="191"/>
    </location>
</feature>
<feature type="domain" description="EF-hand 4" evidence="3">
    <location>
        <begin position="204"/>
        <end position="239"/>
    </location>
</feature>
<feature type="region of interest" description="KIS" evidence="4">
    <location>
        <begin position="2"/>
        <end position="44"/>
    </location>
</feature>
<feature type="region of interest" description="Interaction with KCND2" evidence="2">
    <location>
        <begin position="237"/>
        <end position="250"/>
    </location>
</feature>
<feature type="binding site" evidence="3">
    <location>
        <position position="133"/>
    </location>
    <ligand>
        <name>Ca(2+)</name>
        <dbReference type="ChEBI" id="CHEBI:29108"/>
        <label>1</label>
    </ligand>
</feature>
<feature type="binding site" evidence="3">
    <location>
        <position position="135"/>
    </location>
    <ligand>
        <name>Ca(2+)</name>
        <dbReference type="ChEBI" id="CHEBI:29108"/>
        <label>1</label>
    </ligand>
</feature>
<feature type="binding site" evidence="3">
    <location>
        <position position="137"/>
    </location>
    <ligand>
        <name>Ca(2+)</name>
        <dbReference type="ChEBI" id="CHEBI:29108"/>
        <label>1</label>
    </ligand>
</feature>
<feature type="binding site" evidence="3">
    <location>
        <position position="144"/>
    </location>
    <ligand>
        <name>Ca(2+)</name>
        <dbReference type="ChEBI" id="CHEBI:29108"/>
        <label>1</label>
    </ligand>
</feature>
<feature type="binding site" evidence="3 7">
    <location>
        <position position="169"/>
    </location>
    <ligand>
        <name>Ca(2+)</name>
        <dbReference type="ChEBI" id="CHEBI:29108"/>
        <label>2</label>
    </ligand>
</feature>
<feature type="binding site" evidence="3 7">
    <location>
        <position position="171"/>
    </location>
    <ligand>
        <name>Ca(2+)</name>
        <dbReference type="ChEBI" id="CHEBI:29108"/>
        <label>2</label>
    </ligand>
</feature>
<feature type="binding site" evidence="3 7">
    <location>
        <position position="173"/>
    </location>
    <ligand>
        <name>Ca(2+)</name>
        <dbReference type="ChEBI" id="CHEBI:29108"/>
        <label>2</label>
    </ligand>
</feature>
<feature type="binding site" evidence="3 7">
    <location>
        <position position="175"/>
    </location>
    <ligand>
        <name>Ca(2+)</name>
        <dbReference type="ChEBI" id="CHEBI:29108"/>
        <label>2</label>
    </ligand>
</feature>
<feature type="binding site" evidence="3 7">
    <location>
        <position position="180"/>
    </location>
    <ligand>
        <name>Ca(2+)</name>
        <dbReference type="ChEBI" id="CHEBI:29108"/>
        <label>2</label>
    </ligand>
</feature>
<feature type="binding site" evidence="3 7">
    <location>
        <position position="217"/>
    </location>
    <ligand>
        <name>Ca(2+)</name>
        <dbReference type="ChEBI" id="CHEBI:29108"/>
        <label>3</label>
    </ligand>
</feature>
<feature type="binding site" evidence="3 7">
    <location>
        <position position="219"/>
    </location>
    <ligand>
        <name>Ca(2+)</name>
        <dbReference type="ChEBI" id="CHEBI:29108"/>
        <label>3</label>
    </ligand>
</feature>
<feature type="binding site" evidence="3 7">
    <location>
        <position position="221"/>
    </location>
    <ligand>
        <name>Ca(2+)</name>
        <dbReference type="ChEBI" id="CHEBI:29108"/>
        <label>3</label>
    </ligand>
</feature>
<feature type="binding site" evidence="3 7">
    <location>
        <position position="228"/>
    </location>
    <ligand>
        <name>Ca(2+)</name>
        <dbReference type="ChEBI" id="CHEBI:29108"/>
        <label>3</label>
    </ligand>
</feature>
<feature type="modified residue" description="Phosphoserine" evidence="15">
    <location>
        <position position="17"/>
    </location>
</feature>
<feature type="modified residue" description="Phosphoserine" evidence="15">
    <location>
        <position position="56"/>
    </location>
</feature>
<feature type="splice variant" id="VSP_015069" description="In isoform 3." evidence="12">
    <location>
        <begin position="1"/>
        <end position="62"/>
    </location>
</feature>
<feature type="splice variant" id="VSP_015070" description="In isoform 4." evidence="10 11">
    <original>MNVRRVESISAQLEEASSTGGFLYAQNNTKRSIKERLMKLLPCSAAKTSSPAIQN</original>
    <variation>MNLEGLEMIAVLIVIVLFVKLLEQFGLIEAGLED</variation>
    <location>
        <begin position="1"/>
        <end position="55"/>
    </location>
</feature>
<feature type="splice variant" id="VSP_015071" description="In isoform 2." evidence="13">
    <original>GFLYAQNNTKRSIKERLMKLLPCSAAKTSSPAIQN</original>
    <variation>D</variation>
    <location>
        <begin position="21"/>
        <end position="55"/>
    </location>
</feature>
<feature type="sequence conflict" description="In Ref. 1; AAG36976." evidence="14" ref="1">
    <original>S</original>
    <variation>T</variation>
    <location>
        <position position="32"/>
    </location>
</feature>
<feature type="sequence conflict" description="In Ref. 4; BAC30218." evidence="14" ref="4">
    <original>R</original>
    <variation>K</variation>
    <location>
        <position position="67"/>
    </location>
</feature>
<feature type="helix" evidence="16">
    <location>
        <begin position="57"/>
        <end position="61"/>
    </location>
</feature>
<feature type="helix" evidence="16">
    <location>
        <begin position="69"/>
        <end position="95"/>
    </location>
</feature>
<feature type="helix" evidence="16">
    <location>
        <begin position="105"/>
        <end position="115"/>
    </location>
</feature>
<feature type="strand" evidence="16">
    <location>
        <begin position="118"/>
        <end position="120"/>
    </location>
</feature>
<feature type="helix" evidence="16">
    <location>
        <begin position="121"/>
        <end position="130"/>
    </location>
</feature>
<feature type="helix" evidence="16">
    <location>
        <begin position="142"/>
        <end position="154"/>
    </location>
</feature>
<feature type="helix" evidence="16">
    <location>
        <begin position="157"/>
        <end position="168"/>
    </location>
</feature>
<feature type="helix" evidence="16">
    <location>
        <begin position="178"/>
        <end position="191"/>
    </location>
</feature>
<feature type="helix" evidence="16">
    <location>
        <begin position="208"/>
        <end position="216"/>
    </location>
</feature>
<feature type="strand" evidence="16">
    <location>
        <begin position="221"/>
        <end position="223"/>
    </location>
</feature>
<feature type="helix" evidence="16">
    <location>
        <begin position="226"/>
        <end position="234"/>
    </location>
</feature>
<feature type="helix" evidence="16">
    <location>
        <begin position="237"/>
        <end position="246"/>
    </location>
</feature>
<gene>
    <name type="primary">Kcnip4</name>
    <name type="synonym">Calp</name>
    <name type="synonym">Kchip4</name>
</gene>
<accession>Q6PHZ8</accession>
<accession>Q6DTJ3</accession>
<accession>Q8CAD0</accession>
<accession>Q8R4I2</accession>
<accession>Q9EQ01</accession>
<organism>
    <name type="scientific">Mus musculus</name>
    <name type="common">Mouse</name>
    <dbReference type="NCBI Taxonomy" id="10090"/>
    <lineage>
        <taxon>Eukaryota</taxon>
        <taxon>Metazoa</taxon>
        <taxon>Chordata</taxon>
        <taxon>Craniata</taxon>
        <taxon>Vertebrata</taxon>
        <taxon>Euteleostomi</taxon>
        <taxon>Mammalia</taxon>
        <taxon>Eutheria</taxon>
        <taxon>Euarchontoglires</taxon>
        <taxon>Glires</taxon>
        <taxon>Rodentia</taxon>
        <taxon>Myomorpha</taxon>
        <taxon>Muroidea</taxon>
        <taxon>Muridae</taxon>
        <taxon>Murinae</taxon>
        <taxon>Mus</taxon>
        <taxon>Mus</taxon>
    </lineage>
</organism>
<dbReference type="EMBL" id="AF305071">
    <property type="protein sequence ID" value="AAG36976.1"/>
    <property type="molecule type" value="mRNA"/>
</dbReference>
<dbReference type="EMBL" id="AF453243">
    <property type="protein sequence ID" value="AAL86766.1"/>
    <property type="molecule type" value="mRNA"/>
</dbReference>
<dbReference type="EMBL" id="AY647240">
    <property type="protein sequence ID" value="AAT68466.1"/>
    <property type="molecule type" value="mRNA"/>
</dbReference>
<dbReference type="EMBL" id="AK039048">
    <property type="protein sequence ID" value="BAC30218.1"/>
    <property type="molecule type" value="mRNA"/>
</dbReference>
<dbReference type="EMBL" id="BC051130">
    <property type="protein sequence ID" value="AAH51130.1"/>
    <property type="molecule type" value="mRNA"/>
</dbReference>
<dbReference type="EMBL" id="CK618709">
    <property type="status" value="NOT_ANNOTATED_CDS"/>
    <property type="molecule type" value="mRNA"/>
</dbReference>
<dbReference type="CCDS" id="CCDS39084.1">
    <molecule id="Q6PHZ8-4"/>
</dbReference>
<dbReference type="CCDS" id="CCDS57341.1">
    <molecule id="Q6PHZ8-2"/>
</dbReference>
<dbReference type="CCDS" id="CCDS57342.1">
    <molecule id="Q6PHZ8-1"/>
</dbReference>
<dbReference type="RefSeq" id="NP_001186171.1">
    <molecule id="Q6PHZ8-1"/>
    <property type="nucleotide sequence ID" value="NM_001199242.1"/>
</dbReference>
<dbReference type="RefSeq" id="NP_001186172.1">
    <molecule id="Q6PHZ8-2"/>
    <property type="nucleotide sequence ID" value="NM_001199243.1"/>
</dbReference>
<dbReference type="RefSeq" id="NP_084541.3">
    <molecule id="Q6PHZ8-4"/>
    <property type="nucleotide sequence ID" value="NM_030265.3"/>
</dbReference>
<dbReference type="RefSeq" id="XP_030110782.1">
    <molecule id="Q6PHZ8-3"/>
    <property type="nucleotide sequence ID" value="XM_030254922.2"/>
</dbReference>
<dbReference type="RefSeq" id="XP_036021517.1">
    <molecule id="Q6PHZ8-3"/>
    <property type="nucleotide sequence ID" value="XM_036165624.1"/>
</dbReference>
<dbReference type="PDB" id="3DD4">
    <property type="method" value="X-ray"/>
    <property type="resolution" value="3.00 A"/>
    <property type="chains" value="A=56-250"/>
</dbReference>
<dbReference type="PDBsum" id="3DD4"/>
<dbReference type="BMRB" id="Q6PHZ8"/>
<dbReference type="SMR" id="Q6PHZ8"/>
<dbReference type="BioGRID" id="219785">
    <property type="interactions" value="2"/>
</dbReference>
<dbReference type="FunCoup" id="Q6PHZ8">
    <property type="interactions" value="737"/>
</dbReference>
<dbReference type="STRING" id="10090.ENSMUSP00000084656"/>
<dbReference type="iPTMnet" id="Q6PHZ8"/>
<dbReference type="PhosphoSitePlus" id="Q6PHZ8"/>
<dbReference type="SwissPalm" id="Q6PHZ8"/>
<dbReference type="PaxDb" id="10090-ENSMUSP00000134758"/>
<dbReference type="ProteomicsDB" id="263585">
    <molecule id="Q6PHZ8-1"/>
</dbReference>
<dbReference type="ProteomicsDB" id="263586">
    <molecule id="Q6PHZ8-2"/>
</dbReference>
<dbReference type="ProteomicsDB" id="263587">
    <molecule id="Q6PHZ8-3"/>
</dbReference>
<dbReference type="ProteomicsDB" id="263588">
    <molecule id="Q6PHZ8-4"/>
</dbReference>
<dbReference type="ABCD" id="Q6PHZ8">
    <property type="antibodies" value="2 sequenced antibodies"/>
</dbReference>
<dbReference type="Antibodypedia" id="10064">
    <property type="antibodies" value="192 antibodies from 26 providers"/>
</dbReference>
<dbReference type="DNASU" id="80334"/>
<dbReference type="Ensembl" id="ENSMUST00000087395.11">
    <molecule id="Q6PHZ8-1"/>
    <property type="protein sequence ID" value="ENSMUSP00000084656.5"/>
    <property type="gene ID" value="ENSMUSG00000029088.17"/>
</dbReference>
<dbReference type="Ensembl" id="ENSMUST00000176191.8">
    <molecule id="Q6PHZ8-2"/>
    <property type="protein sequence ID" value="ENSMUSP00000135071.3"/>
    <property type="gene ID" value="ENSMUSG00000029088.17"/>
</dbReference>
<dbReference type="Ensembl" id="ENSMUST00000176978.8">
    <molecule id="Q6PHZ8-4"/>
    <property type="protein sequence ID" value="ENSMUSP00000134758.2"/>
    <property type="gene ID" value="ENSMUSG00000029088.17"/>
</dbReference>
<dbReference type="GeneID" id="80334"/>
<dbReference type="KEGG" id="mmu:80334"/>
<dbReference type="UCSC" id="uc033ijo.1">
    <molecule id="Q6PHZ8-1"/>
    <property type="organism name" value="mouse"/>
</dbReference>
<dbReference type="AGR" id="MGI:1933131"/>
<dbReference type="CTD" id="80333"/>
<dbReference type="MGI" id="MGI:1933131">
    <property type="gene designation" value="Kcnip4"/>
</dbReference>
<dbReference type="VEuPathDB" id="HostDB:ENSMUSG00000029088"/>
<dbReference type="eggNOG" id="KOG0044">
    <property type="taxonomic scope" value="Eukaryota"/>
</dbReference>
<dbReference type="GeneTree" id="ENSGT00940000158985"/>
<dbReference type="HOGENOM" id="CLU_072366_2_2_1"/>
<dbReference type="InParanoid" id="Q6PHZ8"/>
<dbReference type="OrthoDB" id="191686at2759"/>
<dbReference type="PhylomeDB" id="Q6PHZ8"/>
<dbReference type="TreeFam" id="TF318560"/>
<dbReference type="Reactome" id="R-MMU-5576894">
    <property type="pathway name" value="Phase 1 - inactivation of fast Na+ channels"/>
</dbReference>
<dbReference type="BioGRID-ORCS" id="80334">
    <property type="hits" value="4 hits in 77 CRISPR screens"/>
</dbReference>
<dbReference type="CD-CODE" id="CE726F99">
    <property type="entry name" value="Postsynaptic density"/>
</dbReference>
<dbReference type="ChiTaRS" id="Kcnip4">
    <property type="organism name" value="mouse"/>
</dbReference>
<dbReference type="EvolutionaryTrace" id="Q6PHZ8"/>
<dbReference type="PRO" id="PR:Q6PHZ8"/>
<dbReference type="Proteomes" id="UP000000589">
    <property type="component" value="Chromosome 5"/>
</dbReference>
<dbReference type="RNAct" id="Q6PHZ8">
    <property type="molecule type" value="protein"/>
</dbReference>
<dbReference type="Bgee" id="ENSMUSG00000029088">
    <property type="expression patterns" value="Expressed in medial dorsal nucleus of thalamus and 161 other cell types or tissues"/>
</dbReference>
<dbReference type="ExpressionAtlas" id="Q6PHZ8">
    <property type="expression patterns" value="baseline and differential"/>
</dbReference>
<dbReference type="GO" id="GO:0005829">
    <property type="term" value="C:cytosol"/>
    <property type="evidence" value="ECO:0000250"/>
    <property type="project" value="UniProtKB"/>
</dbReference>
<dbReference type="GO" id="GO:0005777">
    <property type="term" value="C:peroxisome"/>
    <property type="evidence" value="ECO:0000250"/>
    <property type="project" value="UniProtKB"/>
</dbReference>
<dbReference type="GO" id="GO:0005886">
    <property type="term" value="C:plasma membrane"/>
    <property type="evidence" value="ECO:0000250"/>
    <property type="project" value="UniProtKB"/>
</dbReference>
<dbReference type="GO" id="GO:0008076">
    <property type="term" value="C:voltage-gated potassium channel complex"/>
    <property type="evidence" value="ECO:0000314"/>
    <property type="project" value="UniProtKB"/>
</dbReference>
<dbReference type="GO" id="GO:0005509">
    <property type="term" value="F:calcium ion binding"/>
    <property type="evidence" value="ECO:0000314"/>
    <property type="project" value="UniProtKB"/>
</dbReference>
<dbReference type="GO" id="GO:0005267">
    <property type="term" value="F:potassium channel activity"/>
    <property type="evidence" value="ECO:0007669"/>
    <property type="project" value="UniProtKB-KW"/>
</dbReference>
<dbReference type="GO" id="GO:0015459">
    <property type="term" value="F:potassium channel regulator activity"/>
    <property type="evidence" value="ECO:0000315"/>
    <property type="project" value="UniProtKB"/>
</dbReference>
<dbReference type="GO" id="GO:0072659">
    <property type="term" value="P:protein localization to plasma membrane"/>
    <property type="evidence" value="ECO:0000250"/>
    <property type="project" value="UniProtKB"/>
</dbReference>
<dbReference type="GO" id="GO:1901379">
    <property type="term" value="P:regulation of potassium ion transmembrane transport"/>
    <property type="evidence" value="ECO:0000315"/>
    <property type="project" value="UniProtKB"/>
</dbReference>
<dbReference type="CDD" id="cd00051">
    <property type="entry name" value="EFh"/>
    <property type="match status" value="2"/>
</dbReference>
<dbReference type="FunFam" id="1.10.238.10:FF:000043">
    <property type="entry name" value="Kv channel-interacting protein 1 isoform 2"/>
    <property type="match status" value="1"/>
</dbReference>
<dbReference type="Gene3D" id="1.10.238.10">
    <property type="entry name" value="EF-hand"/>
    <property type="match status" value="1"/>
</dbReference>
<dbReference type="InterPro" id="IPR011992">
    <property type="entry name" value="EF-hand-dom_pair"/>
</dbReference>
<dbReference type="InterPro" id="IPR018247">
    <property type="entry name" value="EF_Hand_1_Ca_BS"/>
</dbReference>
<dbReference type="InterPro" id="IPR002048">
    <property type="entry name" value="EF_hand_dom"/>
</dbReference>
<dbReference type="InterPro" id="IPR028846">
    <property type="entry name" value="Recoverin"/>
</dbReference>
<dbReference type="PANTHER" id="PTHR23055">
    <property type="entry name" value="CALCIUM BINDING PROTEINS"/>
    <property type="match status" value="1"/>
</dbReference>
<dbReference type="PANTHER" id="PTHR23055:SF30">
    <property type="entry name" value="KV CHANNEL-INTERACTING PROTEIN 4"/>
    <property type="match status" value="1"/>
</dbReference>
<dbReference type="Pfam" id="PF13499">
    <property type="entry name" value="EF-hand_7"/>
    <property type="match status" value="1"/>
</dbReference>
<dbReference type="Pfam" id="PF13833">
    <property type="entry name" value="EF-hand_8"/>
    <property type="match status" value="1"/>
</dbReference>
<dbReference type="PRINTS" id="PR00450">
    <property type="entry name" value="RECOVERIN"/>
</dbReference>
<dbReference type="SMART" id="SM00054">
    <property type="entry name" value="EFh"/>
    <property type="match status" value="3"/>
</dbReference>
<dbReference type="SUPFAM" id="SSF47473">
    <property type="entry name" value="EF-hand"/>
    <property type="match status" value="1"/>
</dbReference>
<dbReference type="PROSITE" id="PS00018">
    <property type="entry name" value="EF_HAND_1"/>
    <property type="match status" value="3"/>
</dbReference>
<dbReference type="PROSITE" id="PS50222">
    <property type="entry name" value="EF_HAND_2"/>
    <property type="match status" value="3"/>
</dbReference>
<name>KCIP4_MOUSE</name>